<gene>
    <name type="ordered locus">At4g39600</name>
    <name type="ORF">F23K16.230</name>
</gene>
<protein>
    <recommendedName>
        <fullName>Putative F-box/kelch-repeat protein At4g39600</fullName>
    </recommendedName>
</protein>
<organism>
    <name type="scientific">Arabidopsis thaliana</name>
    <name type="common">Mouse-ear cress</name>
    <dbReference type="NCBI Taxonomy" id="3702"/>
    <lineage>
        <taxon>Eukaryota</taxon>
        <taxon>Viridiplantae</taxon>
        <taxon>Streptophyta</taxon>
        <taxon>Embryophyta</taxon>
        <taxon>Tracheophyta</taxon>
        <taxon>Spermatophyta</taxon>
        <taxon>Magnoliopsida</taxon>
        <taxon>eudicotyledons</taxon>
        <taxon>Gunneridae</taxon>
        <taxon>Pentapetalae</taxon>
        <taxon>rosids</taxon>
        <taxon>malvids</taxon>
        <taxon>Brassicales</taxon>
        <taxon>Brassicaceae</taxon>
        <taxon>Camelineae</taxon>
        <taxon>Arabidopsis</taxon>
    </lineage>
</organism>
<dbReference type="EMBL" id="AL078620">
    <property type="protein sequence ID" value="CAB44695.1"/>
    <property type="molecule type" value="Genomic_DNA"/>
</dbReference>
<dbReference type="EMBL" id="AL161595">
    <property type="protein sequence ID" value="CAB80623.1"/>
    <property type="molecule type" value="Genomic_DNA"/>
</dbReference>
<dbReference type="EMBL" id="CP002687">
    <property type="protein sequence ID" value="AEE87092.1"/>
    <property type="molecule type" value="Genomic_DNA"/>
</dbReference>
<dbReference type="PIR" id="T09376">
    <property type="entry name" value="T09376"/>
</dbReference>
<dbReference type="RefSeq" id="NP_195670.1">
    <property type="nucleotide sequence ID" value="NM_120120.2"/>
</dbReference>
<dbReference type="SMR" id="Q9SV98"/>
<dbReference type="FunCoup" id="Q9SV98">
    <property type="interactions" value="21"/>
</dbReference>
<dbReference type="PaxDb" id="3702-AT4G39600.1"/>
<dbReference type="ProteomicsDB" id="228927"/>
<dbReference type="EnsemblPlants" id="AT4G39600.1">
    <property type="protein sequence ID" value="AT4G39600.1"/>
    <property type="gene ID" value="AT4G39600"/>
</dbReference>
<dbReference type="GeneID" id="830114"/>
<dbReference type="Gramene" id="AT4G39600.1">
    <property type="protein sequence ID" value="AT4G39600.1"/>
    <property type="gene ID" value="AT4G39600"/>
</dbReference>
<dbReference type="KEGG" id="ath:AT4G39600"/>
<dbReference type="Araport" id="AT4G39600"/>
<dbReference type="TAIR" id="AT4G39600"/>
<dbReference type="eggNOG" id="KOG1072">
    <property type="taxonomic scope" value="Eukaryota"/>
</dbReference>
<dbReference type="HOGENOM" id="CLU_032521_1_2_1"/>
<dbReference type="InParanoid" id="Q9SV98"/>
<dbReference type="OMA" id="CRKPEFQ"/>
<dbReference type="PhylomeDB" id="Q9SV98"/>
<dbReference type="PRO" id="PR:Q9SV98"/>
<dbReference type="Proteomes" id="UP000006548">
    <property type="component" value="Chromosome 4"/>
</dbReference>
<dbReference type="ExpressionAtlas" id="Q9SV98">
    <property type="expression patterns" value="baseline and differential"/>
</dbReference>
<dbReference type="CDD" id="cd22152">
    <property type="entry name" value="F-box_AtAFR-like"/>
    <property type="match status" value="1"/>
</dbReference>
<dbReference type="Gene3D" id="2.120.10.80">
    <property type="entry name" value="Kelch-type beta propeller"/>
    <property type="match status" value="1"/>
</dbReference>
<dbReference type="InterPro" id="IPR036047">
    <property type="entry name" value="F-box-like_dom_sf"/>
</dbReference>
<dbReference type="InterPro" id="IPR050354">
    <property type="entry name" value="F-box/kelch-repeat_ARATH"/>
</dbReference>
<dbReference type="InterPro" id="IPR001810">
    <property type="entry name" value="F-box_dom"/>
</dbReference>
<dbReference type="InterPro" id="IPR015915">
    <property type="entry name" value="Kelch-typ_b-propeller"/>
</dbReference>
<dbReference type="PANTHER" id="PTHR24414">
    <property type="entry name" value="F-BOX/KELCH-REPEAT PROTEIN SKIP4"/>
    <property type="match status" value="1"/>
</dbReference>
<dbReference type="PANTHER" id="PTHR24414:SF184">
    <property type="entry name" value="GALACTOSE OXIDASE_KELCH REPEAT SUPERFAMILY PROTEIN"/>
    <property type="match status" value="1"/>
</dbReference>
<dbReference type="Pfam" id="PF00646">
    <property type="entry name" value="F-box"/>
    <property type="match status" value="1"/>
</dbReference>
<dbReference type="Pfam" id="PF25210">
    <property type="entry name" value="Kelch_FKB95"/>
    <property type="match status" value="1"/>
</dbReference>
<dbReference type="SMART" id="SM00256">
    <property type="entry name" value="FBOX"/>
    <property type="match status" value="1"/>
</dbReference>
<dbReference type="SUPFAM" id="SSF81383">
    <property type="entry name" value="F-box domain"/>
    <property type="match status" value="1"/>
</dbReference>
<dbReference type="SUPFAM" id="SSF117281">
    <property type="entry name" value="Kelch motif"/>
    <property type="match status" value="1"/>
</dbReference>
<feature type="chain" id="PRO_0000283261" description="Putative F-box/kelch-repeat protein At4g39600">
    <location>
        <begin position="1"/>
        <end position="367"/>
    </location>
</feature>
<feature type="domain" description="F-box">
    <location>
        <begin position="11"/>
        <end position="57"/>
    </location>
</feature>
<feature type="repeat" description="Kelch 1">
    <location>
        <begin position="127"/>
        <end position="171"/>
    </location>
</feature>
<feature type="repeat" description="Kelch 2">
    <location>
        <begin position="172"/>
        <end position="216"/>
    </location>
</feature>
<sequence length="367" mass="41212">MKGKKPSIEIATSNPSLPEDLVVSCLARVSRLYYPTLSLVSKSFRSLIASPDLYKTRSLLGRTESCLYLCLRYSPEDNPRWFTLCRKPNRRTLSKEKNESSGNLLVPIPIINSPPLEWSSIVAVGSHLYAINGPIEDAPCSNVSFLDCRSHTWLEAPSMRVAHTNSQLDGKMYLAGSSENVDSLNCIQVFSTKTQTWKPVPFQKRIFGVGDLEGKIYTICRTECGQGVTIKPKDLTCDVVGFCGEKDWSSVCMIGNIVYFYRPNGEFLWIYSGKGESARRNLKGLEGLPKFDDYASVKLVDYGGKLMVLWDTYVPESESKEKMIWCAEISLQKKCNNEEIWGTVEWFDAVLTVPEDCKFVRAIAATV</sequence>
<proteinExistence type="predicted"/>
<name>FK103_ARATH</name>
<keyword id="KW-0880">Kelch repeat</keyword>
<keyword id="KW-1185">Reference proteome</keyword>
<keyword id="KW-0677">Repeat</keyword>
<accession>Q9SV98</accession>
<reference key="1">
    <citation type="journal article" date="1999" name="Nature">
        <title>Sequence and analysis of chromosome 4 of the plant Arabidopsis thaliana.</title>
        <authorList>
            <person name="Mayer K.F.X."/>
            <person name="Schueller C."/>
            <person name="Wambutt R."/>
            <person name="Murphy G."/>
            <person name="Volckaert G."/>
            <person name="Pohl T."/>
            <person name="Duesterhoeft A."/>
            <person name="Stiekema W."/>
            <person name="Entian K.-D."/>
            <person name="Terryn N."/>
            <person name="Harris B."/>
            <person name="Ansorge W."/>
            <person name="Brandt P."/>
            <person name="Grivell L.A."/>
            <person name="Rieger M."/>
            <person name="Weichselgartner M."/>
            <person name="de Simone V."/>
            <person name="Obermaier B."/>
            <person name="Mache R."/>
            <person name="Mueller M."/>
            <person name="Kreis M."/>
            <person name="Delseny M."/>
            <person name="Puigdomenech P."/>
            <person name="Watson M."/>
            <person name="Schmidtheini T."/>
            <person name="Reichert B."/>
            <person name="Portetelle D."/>
            <person name="Perez-Alonso M."/>
            <person name="Boutry M."/>
            <person name="Bancroft I."/>
            <person name="Vos P."/>
            <person name="Hoheisel J."/>
            <person name="Zimmermann W."/>
            <person name="Wedler H."/>
            <person name="Ridley P."/>
            <person name="Langham S.-A."/>
            <person name="McCullagh B."/>
            <person name="Bilham L."/>
            <person name="Robben J."/>
            <person name="van der Schueren J."/>
            <person name="Grymonprez B."/>
            <person name="Chuang Y.-J."/>
            <person name="Vandenbussche F."/>
            <person name="Braeken M."/>
            <person name="Weltjens I."/>
            <person name="Voet M."/>
            <person name="Bastiaens I."/>
            <person name="Aert R."/>
            <person name="Defoor E."/>
            <person name="Weitzenegger T."/>
            <person name="Bothe G."/>
            <person name="Ramsperger U."/>
            <person name="Hilbert H."/>
            <person name="Braun M."/>
            <person name="Holzer E."/>
            <person name="Brandt A."/>
            <person name="Peters S."/>
            <person name="van Staveren M."/>
            <person name="Dirkse W."/>
            <person name="Mooijman P."/>
            <person name="Klein Lankhorst R."/>
            <person name="Rose M."/>
            <person name="Hauf J."/>
            <person name="Koetter P."/>
            <person name="Berneiser S."/>
            <person name="Hempel S."/>
            <person name="Feldpausch M."/>
            <person name="Lamberth S."/>
            <person name="Van den Daele H."/>
            <person name="De Keyser A."/>
            <person name="Buysshaert C."/>
            <person name="Gielen J."/>
            <person name="Villarroel R."/>
            <person name="De Clercq R."/>
            <person name="van Montagu M."/>
            <person name="Rogers J."/>
            <person name="Cronin A."/>
            <person name="Quail M.A."/>
            <person name="Bray-Allen S."/>
            <person name="Clark L."/>
            <person name="Doggett J."/>
            <person name="Hall S."/>
            <person name="Kay M."/>
            <person name="Lennard N."/>
            <person name="McLay K."/>
            <person name="Mayes R."/>
            <person name="Pettett A."/>
            <person name="Rajandream M.A."/>
            <person name="Lyne M."/>
            <person name="Benes V."/>
            <person name="Rechmann S."/>
            <person name="Borkova D."/>
            <person name="Bloecker H."/>
            <person name="Scharfe M."/>
            <person name="Grimm M."/>
            <person name="Loehnert T.-H."/>
            <person name="Dose S."/>
            <person name="de Haan M."/>
            <person name="Maarse A.C."/>
            <person name="Schaefer M."/>
            <person name="Mueller-Auer S."/>
            <person name="Gabel C."/>
            <person name="Fuchs M."/>
            <person name="Fartmann B."/>
            <person name="Granderath K."/>
            <person name="Dauner D."/>
            <person name="Herzl A."/>
            <person name="Neumann S."/>
            <person name="Argiriou A."/>
            <person name="Vitale D."/>
            <person name="Liguori R."/>
            <person name="Piravandi E."/>
            <person name="Massenet O."/>
            <person name="Quigley F."/>
            <person name="Clabauld G."/>
            <person name="Muendlein A."/>
            <person name="Felber R."/>
            <person name="Schnabl S."/>
            <person name="Hiller R."/>
            <person name="Schmidt W."/>
            <person name="Lecharny A."/>
            <person name="Aubourg S."/>
            <person name="Chefdor F."/>
            <person name="Cooke R."/>
            <person name="Berger C."/>
            <person name="Monfort A."/>
            <person name="Casacuberta E."/>
            <person name="Gibbons T."/>
            <person name="Weber N."/>
            <person name="Vandenbol M."/>
            <person name="Bargues M."/>
            <person name="Terol J."/>
            <person name="Torres A."/>
            <person name="Perez-Perez A."/>
            <person name="Purnelle B."/>
            <person name="Bent E."/>
            <person name="Johnson S."/>
            <person name="Tacon D."/>
            <person name="Jesse T."/>
            <person name="Heijnen L."/>
            <person name="Schwarz S."/>
            <person name="Scholler P."/>
            <person name="Heber S."/>
            <person name="Francs P."/>
            <person name="Bielke C."/>
            <person name="Frishman D."/>
            <person name="Haase D."/>
            <person name="Lemcke K."/>
            <person name="Mewes H.-W."/>
            <person name="Stocker S."/>
            <person name="Zaccaria P."/>
            <person name="Bevan M."/>
            <person name="Wilson R.K."/>
            <person name="de la Bastide M."/>
            <person name="Habermann K."/>
            <person name="Parnell L."/>
            <person name="Dedhia N."/>
            <person name="Gnoj L."/>
            <person name="Schutz K."/>
            <person name="Huang E."/>
            <person name="Spiegel L."/>
            <person name="Sekhon M."/>
            <person name="Murray J."/>
            <person name="Sheet P."/>
            <person name="Cordes M."/>
            <person name="Abu-Threideh J."/>
            <person name="Stoneking T."/>
            <person name="Kalicki J."/>
            <person name="Graves T."/>
            <person name="Harmon G."/>
            <person name="Edwards J."/>
            <person name="Latreille P."/>
            <person name="Courtney L."/>
            <person name="Cloud J."/>
            <person name="Abbott A."/>
            <person name="Scott K."/>
            <person name="Johnson D."/>
            <person name="Minx P."/>
            <person name="Bentley D."/>
            <person name="Fulton B."/>
            <person name="Miller N."/>
            <person name="Greco T."/>
            <person name="Kemp K."/>
            <person name="Kramer J."/>
            <person name="Fulton L."/>
            <person name="Mardis E."/>
            <person name="Dante M."/>
            <person name="Pepin K."/>
            <person name="Hillier L.W."/>
            <person name="Nelson J."/>
            <person name="Spieth J."/>
            <person name="Ryan E."/>
            <person name="Andrews S."/>
            <person name="Geisel C."/>
            <person name="Layman D."/>
            <person name="Du H."/>
            <person name="Ali J."/>
            <person name="Berghoff A."/>
            <person name="Jones K."/>
            <person name="Drone K."/>
            <person name="Cotton M."/>
            <person name="Joshu C."/>
            <person name="Antonoiu B."/>
            <person name="Zidanic M."/>
            <person name="Strong C."/>
            <person name="Sun H."/>
            <person name="Lamar B."/>
            <person name="Yordan C."/>
            <person name="Ma P."/>
            <person name="Zhong J."/>
            <person name="Preston R."/>
            <person name="Vil D."/>
            <person name="Shekher M."/>
            <person name="Matero A."/>
            <person name="Shah R."/>
            <person name="Swaby I.K."/>
            <person name="O'Shaughnessy A."/>
            <person name="Rodriguez M."/>
            <person name="Hoffman J."/>
            <person name="Till S."/>
            <person name="Granat S."/>
            <person name="Shohdy N."/>
            <person name="Hasegawa A."/>
            <person name="Hameed A."/>
            <person name="Lodhi M."/>
            <person name="Johnson A."/>
            <person name="Chen E."/>
            <person name="Marra M.A."/>
            <person name="Martienssen R."/>
            <person name="McCombie W.R."/>
        </authorList>
    </citation>
    <scope>NUCLEOTIDE SEQUENCE [LARGE SCALE GENOMIC DNA]</scope>
    <source>
        <strain>cv. Columbia</strain>
    </source>
</reference>
<reference key="2">
    <citation type="journal article" date="2017" name="Plant J.">
        <title>Araport11: a complete reannotation of the Arabidopsis thaliana reference genome.</title>
        <authorList>
            <person name="Cheng C.Y."/>
            <person name="Krishnakumar V."/>
            <person name="Chan A.P."/>
            <person name="Thibaud-Nissen F."/>
            <person name="Schobel S."/>
            <person name="Town C.D."/>
        </authorList>
    </citation>
    <scope>GENOME REANNOTATION</scope>
    <source>
        <strain>cv. Columbia</strain>
    </source>
</reference>